<comment type="function">
    <text evidence="1">Via its association with the multisubunit axonemal dynein complex, may be potentially involved in the regulation of cilia function.</text>
</comment>
<comment type="subunit">
    <text evidence="1">Part of the multisubunit axonemal dynein complex formed at least of two heavy chains and a number of intermediate and light chains.</text>
</comment>
<comment type="subcellular location">
    <subcellularLocation>
        <location evidence="1">Cell projection</location>
        <location evidence="1">Cilium</location>
    </subcellularLocation>
    <subcellularLocation>
        <location evidence="1">Cytoplasm</location>
    </subcellularLocation>
    <text evidence="1">Colocalizes with microtubules in interphase.</text>
</comment>
<comment type="alternative products">
    <event type="alternative splicing"/>
    <isoform>
        <id>A6H8T2-1</id>
        <name>1</name>
        <sequence type="displayed"/>
    </isoform>
    <isoform>
        <id>A6H8T2-2</id>
        <name>2</name>
        <sequence type="described" ref="VSP_036321 VSP_036322"/>
    </isoform>
</comment>
<comment type="similarity">
    <text evidence="3">Belongs to the DNAI7 family.</text>
</comment>
<comment type="sequence caution" evidence="3">
    <conflict type="erroneous initiation">
        <sequence resource="EMBL-CDS" id="AAI46743"/>
    </conflict>
</comment>
<sequence>MPPKDGKSAKKKGGISKAEKERLQREEEEKRQREAEEARLIAEREENERLERERIEQEKQHILELKDRERREDELNELRHILDENHFAVTVWEAECREKSKWERYMLCDGSPDPSVQPEINTYISLWRDDSENQIQKVLEECALTLELEKELEFLLGDGPEPSIAEQYQETLLSLQNLIHYKLNQATEELLKFANYNSDIDTGNMQTVVKDSNITLCLWANLNKNPRFKGYKFEEVGLGFELPKPLAVIEVAVRILHTRYDHLSHHSEREQLQKRRSMMEAILTQNTESSAAVHNGKMEGERDESESSKQVDECHSVRSESRKRSAVSVISAKEGRKSSSIKLLEEGESQMEEITTTLEADQHDPYPSPAEPVTDTDVHIVDLQQFTPLGGVFYFDLFHMPPQSRTVKGWEMRELLDTGLQVFPYPTEQSRIQSSTSVKLDEHSNTTVASLPVGVTVALPHSVLFLEDPQVARWDPIGQHWRTDCISETSYDAELRTISFQMTAFYAFTLLQETYANMPFQSWELRPLGQDSALFTITGALIEVSITVKGKQCMLHTEETKDLDRLLGKWMSPSELQKAMRKAGINIFVNEYSDKYVSINLKDPLIEHAVYEQMALMSSAVAFSWSRWNAQCRQEHLVLQACEQLEVGPVAEKAWSLYLLGAQRNQHLKMKEQEDSFSPELAEGSEFHSTFLHMLRQDLSTEGQARVRQSHHLYIDTVQRLLCATRVLTYS</sequence>
<keyword id="KW-0025">Alternative splicing</keyword>
<keyword id="KW-0966">Cell projection</keyword>
<keyword id="KW-0963">Cytoplasm</keyword>
<keyword id="KW-1185">Reference proteome</keyword>
<accession>A6H8T2</accession>
<accession>Q5RHB4</accession>
<gene>
    <name type="primary">dnai7</name>
    <name type="synonym">cfap94</name>
    <name type="ORF">si:dkey-172o10.5</name>
</gene>
<name>DNAI7_DANRE</name>
<protein>
    <recommendedName>
        <fullName evidence="3">Dynein axonemal intermediate chain 7</fullName>
    </recommendedName>
</protein>
<reference key="1">
    <citation type="journal article" date="2013" name="Nature">
        <title>The zebrafish reference genome sequence and its relationship to the human genome.</title>
        <authorList>
            <person name="Howe K."/>
            <person name="Clark M.D."/>
            <person name="Torroja C.F."/>
            <person name="Torrance J."/>
            <person name="Berthelot C."/>
            <person name="Muffato M."/>
            <person name="Collins J.E."/>
            <person name="Humphray S."/>
            <person name="McLaren K."/>
            <person name="Matthews L."/>
            <person name="McLaren S."/>
            <person name="Sealy I."/>
            <person name="Caccamo M."/>
            <person name="Churcher C."/>
            <person name="Scott C."/>
            <person name="Barrett J.C."/>
            <person name="Koch R."/>
            <person name="Rauch G.J."/>
            <person name="White S."/>
            <person name="Chow W."/>
            <person name="Kilian B."/>
            <person name="Quintais L.T."/>
            <person name="Guerra-Assuncao J.A."/>
            <person name="Zhou Y."/>
            <person name="Gu Y."/>
            <person name="Yen J."/>
            <person name="Vogel J.H."/>
            <person name="Eyre T."/>
            <person name="Redmond S."/>
            <person name="Banerjee R."/>
            <person name="Chi J."/>
            <person name="Fu B."/>
            <person name="Langley E."/>
            <person name="Maguire S.F."/>
            <person name="Laird G.K."/>
            <person name="Lloyd D."/>
            <person name="Kenyon E."/>
            <person name="Donaldson S."/>
            <person name="Sehra H."/>
            <person name="Almeida-King J."/>
            <person name="Loveland J."/>
            <person name="Trevanion S."/>
            <person name="Jones M."/>
            <person name="Quail M."/>
            <person name="Willey D."/>
            <person name="Hunt A."/>
            <person name="Burton J."/>
            <person name="Sims S."/>
            <person name="McLay K."/>
            <person name="Plumb B."/>
            <person name="Davis J."/>
            <person name="Clee C."/>
            <person name="Oliver K."/>
            <person name="Clark R."/>
            <person name="Riddle C."/>
            <person name="Elliot D."/>
            <person name="Threadgold G."/>
            <person name="Harden G."/>
            <person name="Ware D."/>
            <person name="Begum S."/>
            <person name="Mortimore B."/>
            <person name="Kerry G."/>
            <person name="Heath P."/>
            <person name="Phillimore B."/>
            <person name="Tracey A."/>
            <person name="Corby N."/>
            <person name="Dunn M."/>
            <person name="Johnson C."/>
            <person name="Wood J."/>
            <person name="Clark S."/>
            <person name="Pelan S."/>
            <person name="Griffiths G."/>
            <person name="Smith M."/>
            <person name="Glithero R."/>
            <person name="Howden P."/>
            <person name="Barker N."/>
            <person name="Lloyd C."/>
            <person name="Stevens C."/>
            <person name="Harley J."/>
            <person name="Holt K."/>
            <person name="Panagiotidis G."/>
            <person name="Lovell J."/>
            <person name="Beasley H."/>
            <person name="Henderson C."/>
            <person name="Gordon D."/>
            <person name="Auger K."/>
            <person name="Wright D."/>
            <person name="Collins J."/>
            <person name="Raisen C."/>
            <person name="Dyer L."/>
            <person name="Leung K."/>
            <person name="Robertson L."/>
            <person name="Ambridge K."/>
            <person name="Leongamornlert D."/>
            <person name="McGuire S."/>
            <person name="Gilderthorp R."/>
            <person name="Griffiths C."/>
            <person name="Manthravadi D."/>
            <person name="Nichol S."/>
            <person name="Barker G."/>
            <person name="Whitehead S."/>
            <person name="Kay M."/>
            <person name="Brown J."/>
            <person name="Murnane C."/>
            <person name="Gray E."/>
            <person name="Humphries M."/>
            <person name="Sycamore N."/>
            <person name="Barker D."/>
            <person name="Saunders D."/>
            <person name="Wallis J."/>
            <person name="Babbage A."/>
            <person name="Hammond S."/>
            <person name="Mashreghi-Mohammadi M."/>
            <person name="Barr L."/>
            <person name="Martin S."/>
            <person name="Wray P."/>
            <person name="Ellington A."/>
            <person name="Matthews N."/>
            <person name="Ellwood M."/>
            <person name="Woodmansey R."/>
            <person name="Clark G."/>
            <person name="Cooper J."/>
            <person name="Tromans A."/>
            <person name="Grafham D."/>
            <person name="Skuce C."/>
            <person name="Pandian R."/>
            <person name="Andrews R."/>
            <person name="Harrison E."/>
            <person name="Kimberley A."/>
            <person name="Garnett J."/>
            <person name="Fosker N."/>
            <person name="Hall R."/>
            <person name="Garner P."/>
            <person name="Kelly D."/>
            <person name="Bird C."/>
            <person name="Palmer S."/>
            <person name="Gehring I."/>
            <person name="Berger A."/>
            <person name="Dooley C.M."/>
            <person name="Ersan-Urun Z."/>
            <person name="Eser C."/>
            <person name="Geiger H."/>
            <person name="Geisler M."/>
            <person name="Karotki L."/>
            <person name="Kirn A."/>
            <person name="Konantz J."/>
            <person name="Konantz M."/>
            <person name="Oberlander M."/>
            <person name="Rudolph-Geiger S."/>
            <person name="Teucke M."/>
            <person name="Lanz C."/>
            <person name="Raddatz G."/>
            <person name="Osoegawa K."/>
            <person name="Zhu B."/>
            <person name="Rapp A."/>
            <person name="Widaa S."/>
            <person name="Langford C."/>
            <person name="Yang F."/>
            <person name="Schuster S.C."/>
            <person name="Carter N.P."/>
            <person name="Harrow J."/>
            <person name="Ning Z."/>
            <person name="Herrero J."/>
            <person name="Searle S.M."/>
            <person name="Enright A."/>
            <person name="Geisler R."/>
            <person name="Plasterk R.H."/>
            <person name="Lee C."/>
            <person name="Westerfield M."/>
            <person name="de Jong P.J."/>
            <person name="Zon L.I."/>
            <person name="Postlethwait J.H."/>
            <person name="Nusslein-Volhard C."/>
            <person name="Hubbard T.J."/>
            <person name="Roest Crollius H."/>
            <person name="Rogers J."/>
            <person name="Stemple D.L."/>
        </authorList>
    </citation>
    <scope>NUCLEOTIDE SEQUENCE [LARGE SCALE GENOMIC DNA]</scope>
    <source>
        <strain>Tuebingen</strain>
    </source>
</reference>
<reference key="2">
    <citation type="submission" date="2007-06" db="EMBL/GenBank/DDBJ databases">
        <authorList>
            <consortium name="NIH - Zebrafish Gene Collection (ZGC) project"/>
        </authorList>
    </citation>
    <scope>NUCLEOTIDE SEQUENCE [LARGE SCALE MRNA] (ISOFORM 1)</scope>
    <source>
        <tissue>Olfactory epithelium</tissue>
    </source>
</reference>
<organism>
    <name type="scientific">Danio rerio</name>
    <name type="common">Zebrafish</name>
    <name type="synonym">Brachydanio rerio</name>
    <dbReference type="NCBI Taxonomy" id="7955"/>
    <lineage>
        <taxon>Eukaryota</taxon>
        <taxon>Metazoa</taxon>
        <taxon>Chordata</taxon>
        <taxon>Craniata</taxon>
        <taxon>Vertebrata</taxon>
        <taxon>Euteleostomi</taxon>
        <taxon>Actinopterygii</taxon>
        <taxon>Neopterygii</taxon>
        <taxon>Teleostei</taxon>
        <taxon>Ostariophysi</taxon>
        <taxon>Cypriniformes</taxon>
        <taxon>Danionidae</taxon>
        <taxon>Danioninae</taxon>
        <taxon>Danio</taxon>
    </lineage>
</organism>
<evidence type="ECO:0000250" key="1">
    <source>
        <dbReference type="UniProtKB" id="Q6TDU8"/>
    </source>
</evidence>
<evidence type="ECO:0000256" key="2">
    <source>
        <dbReference type="SAM" id="MobiDB-lite"/>
    </source>
</evidence>
<evidence type="ECO:0000305" key="3"/>
<proteinExistence type="evidence at transcript level"/>
<dbReference type="EMBL" id="BX547928">
    <property type="protein sequence ID" value="CAI20728.2"/>
    <property type="molecule type" value="Genomic_DNA"/>
</dbReference>
<dbReference type="EMBL" id="BC146742">
    <property type="protein sequence ID" value="AAI46743.1"/>
    <property type="status" value="ALT_INIT"/>
    <property type="molecule type" value="mRNA"/>
</dbReference>
<dbReference type="SMR" id="A6H8T2"/>
<dbReference type="FunCoup" id="A6H8T2">
    <property type="interactions" value="667"/>
</dbReference>
<dbReference type="STRING" id="7955.ENSDARP00000104413"/>
<dbReference type="PaxDb" id="7955-ENSDARP00000104413"/>
<dbReference type="AGR" id="ZFIN:ZDB-GENE-041210-153"/>
<dbReference type="ZFIN" id="ZDB-GENE-041210-153">
    <property type="gene designation" value="dnai7"/>
</dbReference>
<dbReference type="eggNOG" id="ENOG502QQM9">
    <property type="taxonomic scope" value="Eukaryota"/>
</dbReference>
<dbReference type="InParanoid" id="A6H8T2"/>
<dbReference type="PhylomeDB" id="A6H8T2"/>
<dbReference type="TreeFam" id="TF326474"/>
<dbReference type="PRO" id="PR:A6H8T2"/>
<dbReference type="Proteomes" id="UP000000437">
    <property type="component" value="Unplaced"/>
</dbReference>
<dbReference type="GO" id="GO:0005930">
    <property type="term" value="C:axoneme"/>
    <property type="evidence" value="ECO:0000318"/>
    <property type="project" value="GO_Central"/>
</dbReference>
<dbReference type="GO" id="GO:0048487">
    <property type="term" value="F:beta-tubulin binding"/>
    <property type="evidence" value="ECO:0000318"/>
    <property type="project" value="GO_Central"/>
</dbReference>
<dbReference type="GO" id="GO:0008017">
    <property type="term" value="F:microtubule binding"/>
    <property type="evidence" value="ECO:0000318"/>
    <property type="project" value="GO_Central"/>
</dbReference>
<dbReference type="InterPro" id="IPR022110">
    <property type="entry name" value="CASC1_C"/>
</dbReference>
<dbReference type="InterPro" id="IPR031826">
    <property type="entry name" value="IC97/Casc1_N"/>
</dbReference>
<dbReference type="InterPro" id="IPR023247">
    <property type="entry name" value="IC97/Dnai7-like"/>
</dbReference>
<dbReference type="PANTHER" id="PTHR20929:SF11">
    <property type="entry name" value="DYNEIN AXONEMAL INTERMEDIATE CHAIN 7"/>
    <property type="match status" value="1"/>
</dbReference>
<dbReference type="PANTHER" id="PTHR20929">
    <property type="entry name" value="LUNG ADENOMA SUSCEPTIBILITY 1-RELATED"/>
    <property type="match status" value="1"/>
</dbReference>
<dbReference type="Pfam" id="PF12366">
    <property type="entry name" value="Casc1_C"/>
    <property type="match status" value="1"/>
</dbReference>
<dbReference type="Pfam" id="PF15927">
    <property type="entry name" value="Casc1_N"/>
    <property type="match status" value="1"/>
</dbReference>
<dbReference type="PRINTS" id="PR02043">
    <property type="entry name" value="CANCERSCCP1"/>
</dbReference>
<feature type="chain" id="PRO_0000332734" description="Dynein axonemal intermediate chain 7">
    <location>
        <begin position="1"/>
        <end position="731"/>
    </location>
</feature>
<feature type="region of interest" description="Disordered" evidence="2">
    <location>
        <begin position="1"/>
        <end position="50"/>
    </location>
</feature>
<feature type="region of interest" description="Disordered" evidence="2">
    <location>
        <begin position="285"/>
        <end position="320"/>
    </location>
</feature>
<feature type="compositionally biased region" description="Basic and acidic residues" evidence="2">
    <location>
        <begin position="17"/>
        <end position="50"/>
    </location>
</feature>
<feature type="compositionally biased region" description="Basic and acidic residues" evidence="2">
    <location>
        <begin position="296"/>
        <end position="320"/>
    </location>
</feature>
<feature type="splice variant" id="VSP_036321" description="In isoform 2." evidence="3">
    <original>SAVSVISAKEGRKSSSIKLLEEGESQMEEITTTLEA</original>
    <variation>LIVAYCFIKLSL</variation>
    <location>
        <begin position="325"/>
        <end position="360"/>
    </location>
</feature>
<feature type="splice variant" id="VSP_036322" description="In isoform 2." evidence="3">
    <original>K</original>
    <variation>KAREA</variation>
    <location>
        <position position="549"/>
    </location>
</feature>
<feature type="sequence conflict" description="In Ref. 1; CAI20728." evidence="3" ref="1">
    <original>E</original>
    <variation>D</variation>
    <location>
        <position position="153"/>
    </location>
</feature>
<feature type="sequence conflict" description="In Ref. 1; CAI20728." evidence="3" ref="1">
    <original>S</original>
    <variation>N</variation>
    <location>
        <position position="212"/>
    </location>
</feature>
<feature type="sequence conflict" description="In Ref. 1; CAI20728." evidence="3" ref="1">
    <original>D</original>
    <variation>E</variation>
    <location>
        <position position="312"/>
    </location>
</feature>
<feature type="sequence conflict" description="In Ref. 1; CAI20728." evidence="3" ref="1">
    <original>L</original>
    <variation>S</variation>
    <location>
        <position position="495"/>
    </location>
</feature>
<feature type="sequence conflict" description="In Ref. 1; CAI20728." evidence="3" ref="1">
    <original>R</original>
    <variation>H</variation>
    <location>
        <position position="565"/>
    </location>
</feature>
<feature type="sequence conflict" description="In Ref. 1; CAI20728." evidence="3" ref="1">
    <original>L</original>
    <variation>M</variation>
    <location>
        <position position="645"/>
    </location>
</feature>
<feature type="sequence conflict" description="In Ref. 1; CAI20728." evidence="3" ref="1">
    <original>K</original>
    <variation>E</variation>
    <location>
        <position position="653"/>
    </location>
</feature>
<feature type="sequence conflict" description="In Ref. 1; CAI20728." evidence="3" ref="1">
    <original>L</original>
    <variation>M</variation>
    <location>
        <position position="699"/>
    </location>
</feature>